<keyword id="KW-0002">3D-structure</keyword>
<keyword id="KW-0134">Cell wall</keyword>
<keyword id="KW-0572">Peptidoglycan-anchor</keyword>
<keyword id="KW-0677">Repeat</keyword>
<keyword id="KW-0964">Secreted</keyword>
<keyword id="KW-0732">Signal</keyword>
<gene>
    <name type="primary">isdH</name>
    <name type="synonym">harA</name>
    <name type="synonym">sasI</name>
    <name type="ordered locus">MW1674</name>
</gene>
<comment type="function">
    <text evidence="1">Binds human plasma haptoglobin-hemoglobin complexes, haptoglobin and hemoglobin. Binds haptoglobin-hemoglobin complexes with significantly higher affinity than haptoglobin alone (By similarity).</text>
</comment>
<comment type="subcellular location">
    <subcellularLocation>
        <location evidence="6">Secreted</location>
        <location evidence="6">Cell wall</location>
        <topology evidence="6">Peptidoglycan-anchor</topology>
    </subcellularLocation>
</comment>
<comment type="domain">
    <text evidence="1">The NEAT 1 domain binds with higher affinity than the NEAT 2 domain haptoglobin-hemoglobin complexes, haptoglobin and hemoglobin.</text>
</comment>
<comment type="similarity">
    <text evidence="6">Belongs to the IsdH family.</text>
</comment>
<evidence type="ECO:0000250" key="1"/>
<evidence type="ECO:0000255" key="2"/>
<evidence type="ECO:0000255" key="3">
    <source>
        <dbReference type="PROSITE-ProRule" id="PRU00337"/>
    </source>
</evidence>
<evidence type="ECO:0000255" key="4">
    <source>
        <dbReference type="PROSITE-ProRule" id="PRU00477"/>
    </source>
</evidence>
<evidence type="ECO:0000256" key="5">
    <source>
        <dbReference type="SAM" id="MobiDB-lite"/>
    </source>
</evidence>
<evidence type="ECO:0000305" key="6"/>
<evidence type="ECO:0007829" key="7">
    <source>
        <dbReference type="PDB" id="2LHR"/>
    </source>
</evidence>
<evidence type="ECO:0007829" key="8">
    <source>
        <dbReference type="PDB" id="3SZK"/>
    </source>
</evidence>
<evidence type="ECO:0007829" key="9">
    <source>
        <dbReference type="PDB" id="4FC3"/>
    </source>
</evidence>
<protein>
    <recommendedName>
        <fullName>Iron-regulated surface determinant protein H</fullName>
    </recommendedName>
    <alternativeName>
        <fullName>Haptoglobin receptor A</fullName>
    </alternativeName>
    <alternativeName>
        <fullName>Staphylococcus aureus surface protein I</fullName>
    </alternativeName>
</protein>
<accession>Q8NW39</accession>
<sequence length="895" mass="100847">MNKHHPKLRSFYSIRKSILGVASVIVSTLFLITSQHQAQAAENTNTSDKISENQNNNATTTQPPKDTNQTQPATQPANTAKTYPAADESLKDAIKDPALENKEHDIGPREQVNFQLLDKNNETQYYHFFSIKDPADVYYTKKKAEVELDINTASTWKKFEVYENNQKLPVRLVSYSPVPEDHAYIRFPVSDGTQELKIVSSTQIDDGEETNYDYTKLVFAKPIYNDPSLVKSDTNDAVVTNDQSSSDASNQTNTNTSNQNTSTINNANNQPQATTNMSQPAQPKSSANADQASSQPAHETNSNGNTNDKTNESSNQSDVNQQYPPADESLQDAIKNPAIIDKEHTADNWRPIDFQMKNDKGERQFYHYASTVEPATVIFTKTGPIIELGLKTASTWKKFEVYEGDKKLPVELVSYDSDKDYAYIRFPVSNGTREVKIVSSIEYGENIHEDYDYTLMVFAQPITNNPDDYVDEETYNLQKLLAPYHKAKTLERQVYELEKLQEKLPEKYKAEYKKKLDQTRVELADQVKSAVTEFENVTPTNDQLTDVQEAHFVVFESEENSESVMDGFVEHPFYTATLNGQKYVVMKTKDDSYWKDLIVEGKRVTTVSKDPKNNSRTLIFPYIPDKAVYNAIVKVVVANIGYEGQYHVRIINQDINTKDDDTSQNNTSEPLNVQTGQEGKVADTDVAENSSTATNPKDASDKADVIEPDSDVVKDADNNIDKDVQHDVDHLSDMSDNNHFDKYDLKEMDTQIAKDTDRNVDKGADNSVGMSSNVDTDKDSNKNKDKVIQLNHIADKNNHNGKAAKLDVVKQNYNNTDKVTDKKTTEHLPSDIHKTVDKTVKTKEKAGTPSKENKLSQSKMLPKTGETTSSQSWWGLYALLGMLALFIPKFRKESK</sequence>
<organism>
    <name type="scientific">Staphylococcus aureus (strain MW2)</name>
    <dbReference type="NCBI Taxonomy" id="196620"/>
    <lineage>
        <taxon>Bacteria</taxon>
        <taxon>Bacillati</taxon>
        <taxon>Bacillota</taxon>
        <taxon>Bacilli</taxon>
        <taxon>Bacillales</taxon>
        <taxon>Staphylococcaceae</taxon>
        <taxon>Staphylococcus</taxon>
    </lineage>
</organism>
<proteinExistence type="evidence at protein level"/>
<name>ISDH_STAAW</name>
<feature type="signal peptide" evidence="2">
    <location>
        <begin position="1"/>
        <end position="40"/>
    </location>
</feature>
<feature type="chain" id="PRO_0000285189" description="Iron-regulated surface determinant protein H">
    <location>
        <begin position="41"/>
        <end position="864"/>
    </location>
</feature>
<feature type="propeptide" id="PRO_0000285190" description="Removed by sortase" evidence="4">
    <location>
        <begin position="865"/>
        <end position="895"/>
    </location>
</feature>
<feature type="domain" description="NEAT 1" evidence="3">
    <location>
        <begin position="105"/>
        <end position="232"/>
    </location>
</feature>
<feature type="domain" description="NEAT 2" evidence="3">
    <location>
        <begin position="345"/>
        <end position="471"/>
    </location>
</feature>
<feature type="domain" description="NEAT 3" evidence="3">
    <location>
        <begin position="543"/>
        <end position="660"/>
    </location>
</feature>
<feature type="region of interest" description="Disordered" evidence="5">
    <location>
        <begin position="42"/>
        <end position="84"/>
    </location>
</feature>
<feature type="region of interest" description="Disordered" evidence="5">
    <location>
        <begin position="239"/>
        <end position="324"/>
    </location>
</feature>
<feature type="region of interest" description="Disordered" evidence="5">
    <location>
        <begin position="657"/>
        <end position="705"/>
    </location>
</feature>
<feature type="region of interest" description="Disordered" evidence="5">
    <location>
        <begin position="752"/>
        <end position="782"/>
    </location>
</feature>
<feature type="region of interest" description="Disordered" evidence="5">
    <location>
        <begin position="841"/>
        <end position="868"/>
    </location>
</feature>
<feature type="short sequence motif" description="LPXTG sorting signal" evidence="4">
    <location>
        <begin position="861"/>
        <end position="865"/>
    </location>
</feature>
<feature type="compositionally biased region" description="Low complexity" evidence="5">
    <location>
        <begin position="53"/>
        <end position="62"/>
    </location>
</feature>
<feature type="compositionally biased region" description="Polar residues" evidence="5">
    <location>
        <begin position="63"/>
        <end position="81"/>
    </location>
</feature>
<feature type="compositionally biased region" description="Low complexity" evidence="5">
    <location>
        <begin position="240"/>
        <end position="276"/>
    </location>
</feature>
<feature type="compositionally biased region" description="Polar residues" evidence="5">
    <location>
        <begin position="277"/>
        <end position="323"/>
    </location>
</feature>
<feature type="compositionally biased region" description="Polar residues" evidence="5">
    <location>
        <begin position="663"/>
        <end position="677"/>
    </location>
</feature>
<feature type="compositionally biased region" description="Polar residues" evidence="5">
    <location>
        <begin position="687"/>
        <end position="697"/>
    </location>
</feature>
<feature type="compositionally biased region" description="Basic and acidic residues" evidence="5">
    <location>
        <begin position="752"/>
        <end position="764"/>
    </location>
</feature>
<feature type="compositionally biased region" description="Basic and acidic residues" evidence="5">
    <location>
        <begin position="841"/>
        <end position="854"/>
    </location>
</feature>
<feature type="compositionally biased region" description="Polar residues" evidence="5">
    <location>
        <begin position="855"/>
        <end position="868"/>
    </location>
</feature>
<feature type="modified residue" description="Pentaglycyl murein peptidoglycan amidated threonine" evidence="4">
    <location>
        <position position="864"/>
    </location>
</feature>
<feature type="helix" evidence="8">
    <location>
        <begin position="90"/>
        <end position="93"/>
    </location>
</feature>
<feature type="helix" evidence="8">
    <location>
        <begin position="97"/>
        <end position="99"/>
    </location>
</feature>
<feature type="strand" evidence="8">
    <location>
        <begin position="109"/>
        <end position="112"/>
    </location>
</feature>
<feature type="strand" evidence="8">
    <location>
        <begin position="114"/>
        <end position="117"/>
    </location>
</feature>
<feature type="helix" evidence="8">
    <location>
        <begin position="125"/>
        <end position="130"/>
    </location>
</feature>
<feature type="strand" evidence="8">
    <location>
        <begin position="133"/>
        <end position="138"/>
    </location>
</feature>
<feature type="strand" evidence="8">
    <location>
        <begin position="144"/>
        <end position="151"/>
    </location>
</feature>
<feature type="turn" evidence="8">
    <location>
        <begin position="153"/>
        <end position="155"/>
    </location>
</feature>
<feature type="strand" evidence="8">
    <location>
        <begin position="156"/>
        <end position="167"/>
    </location>
</feature>
<feature type="strand" evidence="8">
    <location>
        <begin position="171"/>
        <end position="175"/>
    </location>
</feature>
<feature type="turn" evidence="8">
    <location>
        <begin position="178"/>
        <end position="180"/>
    </location>
</feature>
<feature type="strand" evidence="8">
    <location>
        <begin position="183"/>
        <end position="189"/>
    </location>
</feature>
<feature type="strand" evidence="8">
    <location>
        <begin position="195"/>
        <end position="204"/>
    </location>
</feature>
<feature type="strand" evidence="8">
    <location>
        <begin position="209"/>
        <end position="212"/>
    </location>
</feature>
<feature type="strand" evidence="8">
    <location>
        <begin position="216"/>
        <end position="221"/>
    </location>
</feature>
<feature type="turn" evidence="9">
    <location>
        <begin position="326"/>
        <end position="328"/>
    </location>
</feature>
<feature type="helix" evidence="9">
    <location>
        <begin position="330"/>
        <end position="333"/>
    </location>
</feature>
<feature type="turn" evidence="9">
    <location>
        <begin position="337"/>
        <end position="339"/>
    </location>
</feature>
<feature type="strand" evidence="9">
    <location>
        <begin position="347"/>
        <end position="352"/>
    </location>
</feature>
<feature type="strand" evidence="9">
    <location>
        <begin position="354"/>
        <end position="357"/>
    </location>
</feature>
<feature type="strand" evidence="9">
    <location>
        <begin position="361"/>
        <end position="363"/>
    </location>
</feature>
<feature type="helix" evidence="9">
    <location>
        <begin position="365"/>
        <end position="369"/>
    </location>
</feature>
<feature type="strand" evidence="9">
    <location>
        <begin position="373"/>
        <end position="380"/>
    </location>
</feature>
<feature type="strand" evidence="9">
    <location>
        <begin position="383"/>
        <end position="392"/>
    </location>
</feature>
<feature type="turn" evidence="9">
    <location>
        <begin position="393"/>
        <end position="395"/>
    </location>
</feature>
<feature type="strand" evidence="9">
    <location>
        <begin position="396"/>
        <end position="403"/>
    </location>
</feature>
<feature type="strand" evidence="9">
    <location>
        <begin position="411"/>
        <end position="416"/>
    </location>
</feature>
<feature type="turn" evidence="9">
    <location>
        <begin position="417"/>
        <end position="420"/>
    </location>
</feature>
<feature type="strand" evidence="9">
    <location>
        <begin position="421"/>
        <end position="427"/>
    </location>
</feature>
<feature type="strand" evidence="9">
    <location>
        <begin position="434"/>
        <end position="443"/>
    </location>
</feature>
<feature type="turn" evidence="9">
    <location>
        <begin position="444"/>
        <end position="446"/>
    </location>
</feature>
<feature type="strand" evidence="9">
    <location>
        <begin position="447"/>
        <end position="460"/>
    </location>
</feature>
<feature type="helix" evidence="7">
    <location>
        <begin position="472"/>
        <end position="486"/>
    </location>
</feature>
<feature type="helix" evidence="7">
    <location>
        <begin position="490"/>
        <end position="503"/>
    </location>
</feature>
<feature type="helix" evidence="7">
    <location>
        <begin position="506"/>
        <end position="529"/>
    </location>
</feature>
<reference key="1">
    <citation type="journal article" date="2002" name="Lancet">
        <title>Genome and virulence determinants of high virulence community-acquired MRSA.</title>
        <authorList>
            <person name="Baba T."/>
            <person name="Takeuchi F."/>
            <person name="Kuroda M."/>
            <person name="Yuzawa H."/>
            <person name="Aoki K."/>
            <person name="Oguchi A."/>
            <person name="Nagai Y."/>
            <person name="Iwama N."/>
            <person name="Asano K."/>
            <person name="Naimi T."/>
            <person name="Kuroda H."/>
            <person name="Cui L."/>
            <person name="Yamamoto K."/>
            <person name="Hiramatsu K."/>
        </authorList>
    </citation>
    <scope>NUCLEOTIDE SEQUENCE [LARGE SCALE GENOMIC DNA]</scope>
    <source>
        <strain>MW2</strain>
    </source>
</reference>
<dbReference type="EMBL" id="BA000033">
    <property type="protein sequence ID" value="BAB95538.1"/>
    <property type="molecule type" value="Genomic_DNA"/>
</dbReference>
<dbReference type="RefSeq" id="WP_001032759.1">
    <property type="nucleotide sequence ID" value="NC_003923.1"/>
</dbReference>
<dbReference type="PDB" id="2LHR">
    <property type="method" value="NMR"/>
    <property type="chains" value="A=467-543"/>
</dbReference>
<dbReference type="PDB" id="3SZK">
    <property type="method" value="X-ray"/>
    <property type="resolution" value="3.01 A"/>
    <property type="chains" value="C/F=86-229"/>
</dbReference>
<dbReference type="PDB" id="4FC3">
    <property type="method" value="X-ray"/>
    <property type="resolution" value="2.26 A"/>
    <property type="chains" value="E=321-464"/>
</dbReference>
<dbReference type="PDBsum" id="2LHR"/>
<dbReference type="PDBsum" id="3SZK"/>
<dbReference type="PDBsum" id="4FC3"/>
<dbReference type="SMR" id="Q8NW39"/>
<dbReference type="KEGG" id="sam:MW1674"/>
<dbReference type="HOGENOM" id="CLU_016167_1_0_9"/>
<dbReference type="EvolutionaryTrace" id="Q8NW39"/>
<dbReference type="GO" id="GO:0005576">
    <property type="term" value="C:extracellular region"/>
    <property type="evidence" value="ECO:0007669"/>
    <property type="project" value="UniProtKB-KW"/>
</dbReference>
<dbReference type="GO" id="GO:0020037">
    <property type="term" value="F:heme binding"/>
    <property type="evidence" value="ECO:0007669"/>
    <property type="project" value="InterPro"/>
</dbReference>
<dbReference type="CDD" id="cd06920">
    <property type="entry name" value="NEAT"/>
    <property type="match status" value="1"/>
</dbReference>
<dbReference type="Gene3D" id="1.20.58.1270">
    <property type="match status" value="1"/>
</dbReference>
<dbReference type="Gene3D" id="2.60.40.1850">
    <property type="match status" value="3"/>
</dbReference>
<dbReference type="InterPro" id="IPR048652">
    <property type="entry name" value="Isd_H_B_linker"/>
</dbReference>
<dbReference type="InterPro" id="IPR050436">
    <property type="entry name" value="IsdA"/>
</dbReference>
<dbReference type="InterPro" id="IPR019930">
    <property type="entry name" value="IsdH"/>
</dbReference>
<dbReference type="InterPro" id="IPR019931">
    <property type="entry name" value="LPXTG_anchor"/>
</dbReference>
<dbReference type="InterPro" id="IPR006635">
    <property type="entry name" value="NEAT_dom"/>
</dbReference>
<dbReference type="InterPro" id="IPR037250">
    <property type="entry name" value="NEAT_dom_sf"/>
</dbReference>
<dbReference type="InterPro" id="IPR005877">
    <property type="entry name" value="YSIRK_signal_dom"/>
</dbReference>
<dbReference type="NCBIfam" id="TIGR03658">
    <property type="entry name" value="IsdH_HarA"/>
    <property type="match status" value="1"/>
</dbReference>
<dbReference type="NCBIfam" id="TIGR01167">
    <property type="entry name" value="LPXTG_anchor"/>
    <property type="match status" value="1"/>
</dbReference>
<dbReference type="NCBIfam" id="TIGR01168">
    <property type="entry name" value="YSIRK_signal"/>
    <property type="match status" value="1"/>
</dbReference>
<dbReference type="PANTHER" id="PTHR37824">
    <property type="entry name" value="IRON-REGULATED SURFACE DETERMINANT PROTEIN C"/>
    <property type="match status" value="1"/>
</dbReference>
<dbReference type="PANTHER" id="PTHR37824:SF1">
    <property type="entry name" value="IRON-REGULATED SURFACE DETERMINANT PROTEIN C"/>
    <property type="match status" value="1"/>
</dbReference>
<dbReference type="Pfam" id="PF20861">
    <property type="entry name" value="Isd_H_B_linker"/>
    <property type="match status" value="1"/>
</dbReference>
<dbReference type="Pfam" id="PF05031">
    <property type="entry name" value="NEAT"/>
    <property type="match status" value="3"/>
</dbReference>
<dbReference type="Pfam" id="PF04650">
    <property type="entry name" value="YSIRK_signal"/>
    <property type="match status" value="1"/>
</dbReference>
<dbReference type="SMART" id="SM00725">
    <property type="entry name" value="NEAT"/>
    <property type="match status" value="3"/>
</dbReference>
<dbReference type="SUPFAM" id="SSF158911">
    <property type="entry name" value="NEAT domain-like"/>
    <property type="match status" value="3"/>
</dbReference>
<dbReference type="PROSITE" id="PS50847">
    <property type="entry name" value="GRAM_POS_ANCHORING"/>
    <property type="match status" value="1"/>
</dbReference>
<dbReference type="PROSITE" id="PS50978">
    <property type="entry name" value="NEAT"/>
    <property type="match status" value="3"/>
</dbReference>